<reference key="1">
    <citation type="journal article" date="2000" name="Nature">
        <title>Sequence and analysis of chromosome 5 of the plant Arabidopsis thaliana.</title>
        <authorList>
            <person name="Tabata S."/>
            <person name="Kaneko T."/>
            <person name="Nakamura Y."/>
            <person name="Kotani H."/>
            <person name="Kato T."/>
            <person name="Asamizu E."/>
            <person name="Miyajima N."/>
            <person name="Sasamoto S."/>
            <person name="Kimura T."/>
            <person name="Hosouchi T."/>
            <person name="Kawashima K."/>
            <person name="Kohara M."/>
            <person name="Matsumoto M."/>
            <person name="Matsuno A."/>
            <person name="Muraki A."/>
            <person name="Nakayama S."/>
            <person name="Nakazaki N."/>
            <person name="Naruo K."/>
            <person name="Okumura S."/>
            <person name="Shinpo S."/>
            <person name="Takeuchi C."/>
            <person name="Wada T."/>
            <person name="Watanabe A."/>
            <person name="Yamada M."/>
            <person name="Yasuda M."/>
            <person name="Sato S."/>
            <person name="de la Bastide M."/>
            <person name="Huang E."/>
            <person name="Spiegel L."/>
            <person name="Gnoj L."/>
            <person name="O'Shaughnessy A."/>
            <person name="Preston R."/>
            <person name="Habermann K."/>
            <person name="Murray J."/>
            <person name="Johnson D."/>
            <person name="Rohlfing T."/>
            <person name="Nelson J."/>
            <person name="Stoneking T."/>
            <person name="Pepin K."/>
            <person name="Spieth J."/>
            <person name="Sekhon M."/>
            <person name="Armstrong J."/>
            <person name="Becker M."/>
            <person name="Belter E."/>
            <person name="Cordum H."/>
            <person name="Cordes M."/>
            <person name="Courtney L."/>
            <person name="Courtney W."/>
            <person name="Dante M."/>
            <person name="Du H."/>
            <person name="Edwards J."/>
            <person name="Fryman J."/>
            <person name="Haakensen B."/>
            <person name="Lamar E."/>
            <person name="Latreille P."/>
            <person name="Leonard S."/>
            <person name="Meyer R."/>
            <person name="Mulvaney E."/>
            <person name="Ozersky P."/>
            <person name="Riley A."/>
            <person name="Strowmatt C."/>
            <person name="Wagner-McPherson C."/>
            <person name="Wollam A."/>
            <person name="Yoakum M."/>
            <person name="Bell M."/>
            <person name="Dedhia N."/>
            <person name="Parnell L."/>
            <person name="Shah R."/>
            <person name="Rodriguez M."/>
            <person name="Hoon See L."/>
            <person name="Vil D."/>
            <person name="Baker J."/>
            <person name="Kirchoff K."/>
            <person name="Toth K."/>
            <person name="King L."/>
            <person name="Bahret A."/>
            <person name="Miller B."/>
            <person name="Marra M.A."/>
            <person name="Martienssen R."/>
            <person name="McCombie W.R."/>
            <person name="Wilson R.K."/>
            <person name="Murphy G."/>
            <person name="Bancroft I."/>
            <person name="Volckaert G."/>
            <person name="Wambutt R."/>
            <person name="Duesterhoeft A."/>
            <person name="Stiekema W."/>
            <person name="Pohl T."/>
            <person name="Entian K.-D."/>
            <person name="Terryn N."/>
            <person name="Hartley N."/>
            <person name="Bent E."/>
            <person name="Johnson S."/>
            <person name="Langham S.-A."/>
            <person name="McCullagh B."/>
            <person name="Robben J."/>
            <person name="Grymonprez B."/>
            <person name="Zimmermann W."/>
            <person name="Ramsperger U."/>
            <person name="Wedler H."/>
            <person name="Balke K."/>
            <person name="Wedler E."/>
            <person name="Peters S."/>
            <person name="van Staveren M."/>
            <person name="Dirkse W."/>
            <person name="Mooijman P."/>
            <person name="Klein Lankhorst R."/>
            <person name="Weitzenegger T."/>
            <person name="Bothe G."/>
            <person name="Rose M."/>
            <person name="Hauf J."/>
            <person name="Berneiser S."/>
            <person name="Hempel S."/>
            <person name="Feldpausch M."/>
            <person name="Lamberth S."/>
            <person name="Villarroel R."/>
            <person name="Gielen J."/>
            <person name="Ardiles W."/>
            <person name="Bents O."/>
            <person name="Lemcke K."/>
            <person name="Kolesov G."/>
            <person name="Mayer K.F.X."/>
            <person name="Rudd S."/>
            <person name="Schoof H."/>
            <person name="Schueller C."/>
            <person name="Zaccaria P."/>
            <person name="Mewes H.-W."/>
            <person name="Bevan M."/>
            <person name="Fransz P.F."/>
        </authorList>
    </citation>
    <scope>NUCLEOTIDE SEQUENCE [LARGE SCALE GENOMIC DNA]</scope>
    <source>
        <strain>cv. Columbia</strain>
    </source>
</reference>
<reference key="2">
    <citation type="journal article" date="2017" name="Plant J.">
        <title>Araport11: a complete reannotation of the Arabidopsis thaliana reference genome.</title>
        <authorList>
            <person name="Cheng C.Y."/>
            <person name="Krishnakumar V."/>
            <person name="Chan A.P."/>
            <person name="Thibaud-Nissen F."/>
            <person name="Schobel S."/>
            <person name="Town C.D."/>
        </authorList>
    </citation>
    <scope>GENOME REANNOTATION</scope>
    <source>
        <strain>cv. Columbia</strain>
    </source>
</reference>
<reference key="3">
    <citation type="journal article" date="2003" name="Science">
        <title>Empirical analysis of transcriptional activity in the Arabidopsis genome.</title>
        <authorList>
            <person name="Yamada K."/>
            <person name="Lim J."/>
            <person name="Dale J.M."/>
            <person name="Chen H."/>
            <person name="Shinn P."/>
            <person name="Palm C.J."/>
            <person name="Southwick A.M."/>
            <person name="Wu H.C."/>
            <person name="Kim C.J."/>
            <person name="Nguyen M."/>
            <person name="Pham P.K."/>
            <person name="Cheuk R.F."/>
            <person name="Karlin-Newmann G."/>
            <person name="Liu S.X."/>
            <person name="Lam B."/>
            <person name="Sakano H."/>
            <person name="Wu T."/>
            <person name="Yu G."/>
            <person name="Miranda M."/>
            <person name="Quach H.L."/>
            <person name="Tripp M."/>
            <person name="Chang C.H."/>
            <person name="Lee J.M."/>
            <person name="Toriumi M.J."/>
            <person name="Chan M.M."/>
            <person name="Tang C.C."/>
            <person name="Onodera C.S."/>
            <person name="Deng J.M."/>
            <person name="Akiyama K."/>
            <person name="Ansari Y."/>
            <person name="Arakawa T."/>
            <person name="Banh J."/>
            <person name="Banno F."/>
            <person name="Bowser L."/>
            <person name="Brooks S.Y."/>
            <person name="Carninci P."/>
            <person name="Chao Q."/>
            <person name="Choy N."/>
            <person name="Enju A."/>
            <person name="Goldsmith A.D."/>
            <person name="Gurjal M."/>
            <person name="Hansen N.F."/>
            <person name="Hayashizaki Y."/>
            <person name="Johnson-Hopson C."/>
            <person name="Hsuan V.W."/>
            <person name="Iida K."/>
            <person name="Karnes M."/>
            <person name="Khan S."/>
            <person name="Koesema E."/>
            <person name="Ishida J."/>
            <person name="Jiang P.X."/>
            <person name="Jones T."/>
            <person name="Kawai J."/>
            <person name="Kamiya A."/>
            <person name="Meyers C."/>
            <person name="Nakajima M."/>
            <person name="Narusaka M."/>
            <person name="Seki M."/>
            <person name="Sakurai T."/>
            <person name="Satou M."/>
            <person name="Tamse R."/>
            <person name="Vaysberg M."/>
            <person name="Wallender E.K."/>
            <person name="Wong C."/>
            <person name="Yamamura Y."/>
            <person name="Yuan S."/>
            <person name="Shinozaki K."/>
            <person name="Davis R.W."/>
            <person name="Theologis A."/>
            <person name="Ecker J.R."/>
        </authorList>
    </citation>
    <scope>NUCLEOTIDE SEQUENCE [LARGE SCALE MRNA]</scope>
    <source>
        <strain>cv. Columbia</strain>
    </source>
</reference>
<reference key="4">
    <citation type="journal article" date="2003" name="DNA Res.">
        <title>Comprehensive analysis of NAC family genes in Oryza sativa and Arabidopsis thaliana.</title>
        <authorList>
            <person name="Ooka H."/>
            <person name="Satoh K."/>
            <person name="Doi K."/>
            <person name="Nagata T."/>
            <person name="Otomo Y."/>
            <person name="Murakami K."/>
            <person name="Matsubara K."/>
            <person name="Osato N."/>
            <person name="Kawai J."/>
            <person name="Carninci P."/>
            <person name="Hayashizaki Y."/>
            <person name="Suzuki K."/>
            <person name="Kojima K."/>
            <person name="Takahara Y."/>
            <person name="Yamamoto K."/>
            <person name="Kikuchi S."/>
        </authorList>
    </citation>
    <scope>GENE FAMILY</scope>
    <scope>NOMENCLATURE</scope>
</reference>
<reference key="5">
    <citation type="journal article" date="2010" name="Plant Cell">
        <title>VND-INTERACTING2, a NAC domain transcription factor, negatively regulates xylem vessel formation in Arabidopsis.</title>
        <authorList>
            <person name="Yamaguchi M."/>
            <person name="Ohtani M."/>
            <person name="Mitsuda N."/>
            <person name="Kubo M."/>
            <person name="Ohme-Takagi M."/>
            <person name="Fukuda H."/>
            <person name="Demura T."/>
        </authorList>
    </citation>
    <scope>FUNCTION</scope>
    <scope>INTERACTION WITH NAC007/VND4; NAC026/VND5 AND NAC030/VND7</scope>
    <scope>TISSUE SPECIFICITY</scope>
    <scope>DEVELOPMENTAL STAGE</scope>
</reference>
<reference key="6">
    <citation type="journal article" date="2011" name="Plant Cell">
        <title>The Arabidopsis NAC transcription factor VNI2 integrates abscisic acid signals into leaf senescence via the COR/RD genes.</title>
        <authorList>
            <person name="Yang S.-D."/>
            <person name="Seo P.J."/>
            <person name="Yoon H.-K."/>
            <person name="Park C.-M."/>
        </authorList>
    </citation>
    <scope>FUNCTION</scope>
    <scope>SUBCELLULAR LOCATION</scope>
    <scope>TISSUE SPECIFICITY</scope>
    <scope>INDUCTION</scope>
    <scope>DISRUPTION PHENOTYPE</scope>
</reference>
<reference key="7">
    <citation type="journal article" date="2014" name="Virus Genes">
        <title>Arabidopsis thaliana NAC083 protein interacts with Mungbean yellow mosaic India virus (MYMIV) Rep protein.</title>
        <authorList>
            <person name="Suyal G."/>
            <person name="Rana V.S."/>
            <person name="Mukherjee S.K."/>
            <person name="Wajid S."/>
            <person name="Choudhury N.R."/>
        </authorList>
    </citation>
    <scope>FUNCTION</scope>
    <scope>INTERACTION WITH MUNGBEAN YELLOW MOSAIC VIRUS AC1 REPLICATION-ASSOCIATED PROTEIN</scope>
</reference>
<evidence type="ECO:0000255" key="1">
    <source>
        <dbReference type="PROSITE-ProRule" id="PRU00353"/>
    </source>
</evidence>
<evidence type="ECO:0000256" key="2">
    <source>
        <dbReference type="SAM" id="MobiDB-lite"/>
    </source>
</evidence>
<evidence type="ECO:0000269" key="3">
    <source>
    </source>
</evidence>
<evidence type="ECO:0000269" key="4">
    <source>
    </source>
</evidence>
<evidence type="ECO:0000269" key="5">
    <source>
    </source>
</evidence>
<evidence type="ECO:0000303" key="6">
    <source>
    </source>
</evidence>
<evidence type="ECO:0000303" key="7">
    <source>
    </source>
</evidence>
<evidence type="ECO:0000305" key="8">
    <source>
    </source>
</evidence>
<evidence type="ECO:0000312" key="9">
    <source>
        <dbReference type="Araport" id="AT5G13180"/>
    </source>
</evidence>
<evidence type="ECO:0000312" key="10">
    <source>
        <dbReference type="EMBL" id="CAC05446.1"/>
    </source>
</evidence>
<accession>Q9FY93</accession>
<comment type="function">
    <text evidence="3 4 5">Transcriptional repressor that negatively regulates the expression of genes involved in xylem vessel formation. Represses the transcriptional activation activity of NAC030/VND7, which regulates protoxylem vessel differentiation by promoting immature xylem vessel-specific genes expression (PubMed:20388856). Transcriptional activator that regulates the COLD-REGULATED (COR15A and COR15B) and RESPONSIVE TO DEHYDRATION (LTI78/RD29A and LTI65/RD29B) genes by binding directly to their promoters. Mediates signaling crosstalk between salt stress response and leaf aging process (PubMed:21673078). May play a role in DNA replication of mungbean yellow mosaic virus (PubMed:24442717).</text>
</comment>
<comment type="subunit">
    <text evidence="3 5">Interacts with NAC007/VND4, NAC026/VND5 and NAC030/VND7 (PubMed:20388856). Interacts with the mungbean yellow mosaic virus (MYMV) AC1 replication-associated protein (PubMed:24442717).</text>
</comment>
<comment type="interaction">
    <interactant intactId="EBI-4453280">
        <id>Q9FY93</id>
    </interactant>
    <interactant intactId="EBI-540891">
        <id>Q8L765</id>
        <label>BPM1</label>
    </interactant>
    <organismsDiffer>false</organismsDiffer>
    <experiments>3</experiments>
</comment>
<comment type="interaction">
    <interactant intactId="EBI-4453280">
        <id>Q9FY93</id>
    </interactant>
    <interactant intactId="EBI-1998655">
        <id>Q8H115</id>
        <label>NAC102</label>
    </interactant>
    <organismsDiffer>false</organismsDiffer>
    <experiments>2</experiments>
</comment>
<comment type="subcellular location">
    <subcellularLocation>
        <location evidence="1 4">Nucleus</location>
    </subcellularLocation>
</comment>
<comment type="tissue specificity">
    <text evidence="3 4">Expressed in xylem and phloem cells in roots and inflorescence stems (PubMed:20388856). Highly expressed in senescent leaves. Expressed in roots, and abscission and dehiscence tissues, such as axils of bracts and abscission zones in cauline leaves and siliques (PubMed:21673078).</text>
</comment>
<comment type="developmental stage">
    <text evidence="3">Up-regulated during xylem vessel element differentiation.</text>
</comment>
<comment type="induction">
    <text evidence="4">By abscisic acid (ABA) and salt stress.</text>
</comment>
<comment type="domain">
    <text evidence="1">The NAC domain includes a DNA binding domain and a dimerization domain.</text>
</comment>
<comment type="disruption phenotype">
    <text evidence="4">Accelerated leaf aging.</text>
</comment>
<comment type="miscellaneous">
    <text evidence="3">Over-expression of NAC083 inhibits protoxylem vessel formation in roots.</text>
</comment>
<name>NAC83_ARATH</name>
<keyword id="KW-0010">Activator</keyword>
<keyword id="KW-0238">DNA-binding</keyword>
<keyword id="KW-0945">Host-virus interaction</keyword>
<keyword id="KW-0539">Nucleus</keyword>
<keyword id="KW-1185">Reference proteome</keyword>
<keyword id="KW-0678">Repressor</keyword>
<keyword id="KW-0346">Stress response</keyword>
<keyword id="KW-0804">Transcription</keyword>
<keyword id="KW-0805">Transcription regulation</keyword>
<proteinExistence type="evidence at protein level"/>
<organism>
    <name type="scientific">Arabidopsis thaliana</name>
    <name type="common">Mouse-ear cress</name>
    <dbReference type="NCBI Taxonomy" id="3702"/>
    <lineage>
        <taxon>Eukaryota</taxon>
        <taxon>Viridiplantae</taxon>
        <taxon>Streptophyta</taxon>
        <taxon>Embryophyta</taxon>
        <taxon>Tracheophyta</taxon>
        <taxon>Spermatophyta</taxon>
        <taxon>Magnoliopsida</taxon>
        <taxon>eudicotyledons</taxon>
        <taxon>Gunneridae</taxon>
        <taxon>Pentapetalae</taxon>
        <taxon>rosids</taxon>
        <taxon>malvids</taxon>
        <taxon>Brassicales</taxon>
        <taxon>Brassicaceae</taxon>
        <taxon>Camelineae</taxon>
        <taxon>Arabidopsis</taxon>
    </lineage>
</organism>
<sequence>MDNVKLVKNGVLRLPPGFRFHPTDEELVVQYLKRKVCSSPLPASIIPEFDVCRADPWDLPGNLEKERYFFSTREAKYPNGNRSNRATGSGYWKATGIDKRVVTSRGNQIVGLKKTLVFYKGKPPHGSRTDWIMHEYRLSSSPPSSMGPTQNWVLCRIFLKKRAGNKNDDDDGDSRNLRHNNNNNSSDQIEIITTDQTDDKTKPIFFDFMRKERTTDLNLLPSSPSSDHASSGVTTEIFSSSDEETSSCNSFR</sequence>
<dbReference type="EMBL" id="AL391711">
    <property type="protein sequence ID" value="CAC05446.1"/>
    <property type="molecule type" value="Genomic_DNA"/>
</dbReference>
<dbReference type="EMBL" id="CP002688">
    <property type="protein sequence ID" value="AED91860.1"/>
    <property type="molecule type" value="Genomic_DNA"/>
</dbReference>
<dbReference type="EMBL" id="AF385734">
    <property type="protein sequence ID" value="AAK60324.1"/>
    <property type="molecule type" value="mRNA"/>
</dbReference>
<dbReference type="EMBL" id="AY143964">
    <property type="protein sequence ID" value="AAN28903.1"/>
    <property type="molecule type" value="mRNA"/>
</dbReference>
<dbReference type="RefSeq" id="NP_196822.1">
    <property type="nucleotide sequence ID" value="NM_121321.4"/>
</dbReference>
<dbReference type="SMR" id="Q9FY93"/>
<dbReference type="FunCoup" id="Q9FY93">
    <property type="interactions" value="534"/>
</dbReference>
<dbReference type="IntAct" id="Q9FY93">
    <property type="interactions" value="5"/>
</dbReference>
<dbReference type="STRING" id="3702.Q9FY93"/>
<dbReference type="PaxDb" id="3702-AT5G13180.1"/>
<dbReference type="ProteomicsDB" id="251236"/>
<dbReference type="EnsemblPlants" id="AT5G13180.1">
    <property type="protein sequence ID" value="AT5G13180.1"/>
    <property type="gene ID" value="AT5G13180"/>
</dbReference>
<dbReference type="GeneID" id="831157"/>
<dbReference type="Gramene" id="AT5G13180.1">
    <property type="protein sequence ID" value="AT5G13180.1"/>
    <property type="gene ID" value="AT5G13180"/>
</dbReference>
<dbReference type="KEGG" id="ath:AT5G13180"/>
<dbReference type="Araport" id="AT5G13180"/>
<dbReference type="TAIR" id="AT5G13180">
    <property type="gene designation" value="NAC083"/>
</dbReference>
<dbReference type="eggNOG" id="ENOG502R7WC">
    <property type="taxonomic scope" value="Eukaryota"/>
</dbReference>
<dbReference type="HOGENOM" id="CLU_035664_9_0_1"/>
<dbReference type="InParanoid" id="Q9FY93"/>
<dbReference type="OMA" id="DFMTKDR"/>
<dbReference type="OrthoDB" id="1871428at2759"/>
<dbReference type="PhylomeDB" id="Q9FY93"/>
<dbReference type="PRO" id="PR:Q9FY93"/>
<dbReference type="Proteomes" id="UP000006548">
    <property type="component" value="Chromosome 5"/>
</dbReference>
<dbReference type="ExpressionAtlas" id="Q9FY93">
    <property type="expression patterns" value="baseline and differential"/>
</dbReference>
<dbReference type="GO" id="GO:0005634">
    <property type="term" value="C:nucleus"/>
    <property type="evidence" value="ECO:0007669"/>
    <property type="project" value="UniProtKB-SubCell"/>
</dbReference>
<dbReference type="GO" id="GO:0003677">
    <property type="term" value="F:DNA binding"/>
    <property type="evidence" value="ECO:0007669"/>
    <property type="project" value="UniProtKB-KW"/>
</dbReference>
<dbReference type="GO" id="GO:0003700">
    <property type="term" value="F:DNA-binding transcription factor activity"/>
    <property type="evidence" value="ECO:0000250"/>
    <property type="project" value="TAIR"/>
</dbReference>
<dbReference type="GO" id="GO:0010150">
    <property type="term" value="P:leaf senescence"/>
    <property type="evidence" value="ECO:0000315"/>
    <property type="project" value="TAIR"/>
</dbReference>
<dbReference type="GO" id="GO:0045892">
    <property type="term" value="P:negative regulation of DNA-templated transcription"/>
    <property type="evidence" value="ECO:0000314"/>
    <property type="project" value="TAIR"/>
</dbReference>
<dbReference type="GO" id="GO:0009737">
    <property type="term" value="P:response to abscisic acid"/>
    <property type="evidence" value="ECO:0000270"/>
    <property type="project" value="TAIR"/>
</dbReference>
<dbReference type="GO" id="GO:0009651">
    <property type="term" value="P:response to salt stress"/>
    <property type="evidence" value="ECO:0000270"/>
    <property type="project" value="TAIR"/>
</dbReference>
<dbReference type="GO" id="GO:0010089">
    <property type="term" value="P:xylem development"/>
    <property type="evidence" value="ECO:0000315"/>
    <property type="project" value="TAIR"/>
</dbReference>
<dbReference type="FunFam" id="2.170.150.80:FF:000011">
    <property type="entry name" value="NAC domain-containing protein 41"/>
    <property type="match status" value="1"/>
</dbReference>
<dbReference type="Gene3D" id="2.170.150.80">
    <property type="entry name" value="NAC domain"/>
    <property type="match status" value="1"/>
</dbReference>
<dbReference type="InterPro" id="IPR003441">
    <property type="entry name" value="NAC-dom"/>
</dbReference>
<dbReference type="InterPro" id="IPR036093">
    <property type="entry name" value="NAC_dom_sf"/>
</dbReference>
<dbReference type="PANTHER" id="PTHR31744:SF93">
    <property type="entry name" value="NAC DOMAIN-CONTAINING PROTEIN"/>
    <property type="match status" value="1"/>
</dbReference>
<dbReference type="PANTHER" id="PTHR31744">
    <property type="entry name" value="PROTEIN CUP-SHAPED COTYLEDON 2-RELATED"/>
    <property type="match status" value="1"/>
</dbReference>
<dbReference type="Pfam" id="PF02365">
    <property type="entry name" value="NAM"/>
    <property type="match status" value="1"/>
</dbReference>
<dbReference type="SUPFAM" id="SSF101941">
    <property type="entry name" value="NAC domain"/>
    <property type="match status" value="1"/>
</dbReference>
<dbReference type="PROSITE" id="PS51005">
    <property type="entry name" value="NAC"/>
    <property type="match status" value="1"/>
</dbReference>
<gene>
    <name evidence="6" type="primary">NAC083</name>
    <name evidence="7" type="synonym">VNI2</name>
    <name evidence="9" type="ordered locus">At5g13180</name>
    <name evidence="10" type="ORF">T19L5.140</name>
</gene>
<protein>
    <recommendedName>
        <fullName evidence="6">NAC domain-containing protein 83</fullName>
        <shortName evidence="6">ANAC083</shortName>
    </recommendedName>
    <alternativeName>
        <fullName evidence="7">Protein VND-INTERACTING 2</fullName>
    </alternativeName>
</protein>
<feature type="chain" id="PRO_0000433241" description="NAC domain-containing protein 83">
    <location>
        <begin position="1"/>
        <end position="252"/>
    </location>
</feature>
<feature type="domain" description="NAC" evidence="1">
    <location>
        <begin position="14"/>
        <end position="160"/>
    </location>
</feature>
<feature type="DNA-binding region" evidence="1">
    <location>
        <begin position="110"/>
        <end position="166"/>
    </location>
</feature>
<feature type="region of interest" description="Disordered" evidence="2">
    <location>
        <begin position="165"/>
        <end position="194"/>
    </location>
</feature>
<feature type="region of interest" description="PEST-like" evidence="8">
    <location>
        <begin position="213"/>
        <end position="226"/>
    </location>
</feature>
<feature type="region of interest" description="Disordered" evidence="2">
    <location>
        <begin position="217"/>
        <end position="252"/>
    </location>
</feature>
<feature type="compositionally biased region" description="Low complexity" evidence="2">
    <location>
        <begin position="180"/>
        <end position="194"/>
    </location>
</feature>
<feature type="compositionally biased region" description="Low complexity" evidence="2">
    <location>
        <begin position="219"/>
        <end position="252"/>
    </location>
</feature>